<protein>
    <recommendedName>
        <fullName>Transducer protein Htr4</fullName>
    </recommendedName>
</protein>
<accession>B0R470</accession>
<accession>Q48319</accession>
<accession>Q9HR92</accession>
<dbReference type="EMBL" id="X95590">
    <property type="protein sequence ID" value="CAA64843.1"/>
    <property type="molecule type" value="Genomic_DNA"/>
</dbReference>
<dbReference type="EMBL" id="AM774415">
    <property type="protein sequence ID" value="CAP13535.1"/>
    <property type="molecule type" value="Genomic_DNA"/>
</dbReference>
<dbReference type="PIR" id="T48897">
    <property type="entry name" value="T48897"/>
</dbReference>
<dbReference type="RefSeq" id="WP_010902562.1">
    <property type="nucleotide sequence ID" value="NC_010364.1"/>
</dbReference>
<dbReference type="SMR" id="B0R470"/>
<dbReference type="BindingDB" id="B0R470"/>
<dbReference type="EnsemblBacteria" id="CAP13535">
    <property type="protein sequence ID" value="CAP13535"/>
    <property type="gene ID" value="OE_2189R"/>
</dbReference>
<dbReference type="GeneID" id="68693648"/>
<dbReference type="KEGG" id="hsl:OE_2189R"/>
<dbReference type="HOGENOM" id="CLU_000445_107_19_2"/>
<dbReference type="PhylomeDB" id="B0R470"/>
<dbReference type="Proteomes" id="UP000001321">
    <property type="component" value="Chromosome"/>
</dbReference>
<dbReference type="GO" id="GO:0005886">
    <property type="term" value="C:plasma membrane"/>
    <property type="evidence" value="ECO:0007669"/>
    <property type="project" value="UniProtKB-SubCell"/>
</dbReference>
<dbReference type="GO" id="GO:0004888">
    <property type="term" value="F:transmembrane signaling receptor activity"/>
    <property type="evidence" value="ECO:0007669"/>
    <property type="project" value="InterPro"/>
</dbReference>
<dbReference type="GO" id="GO:0006935">
    <property type="term" value="P:chemotaxis"/>
    <property type="evidence" value="ECO:0007669"/>
    <property type="project" value="UniProtKB-KW"/>
</dbReference>
<dbReference type="GO" id="GO:0007165">
    <property type="term" value="P:signal transduction"/>
    <property type="evidence" value="ECO:0007669"/>
    <property type="project" value="UniProtKB-KW"/>
</dbReference>
<dbReference type="CDD" id="cd06225">
    <property type="entry name" value="HAMP"/>
    <property type="match status" value="1"/>
</dbReference>
<dbReference type="CDD" id="cd11386">
    <property type="entry name" value="MCP_signal"/>
    <property type="match status" value="1"/>
</dbReference>
<dbReference type="Gene3D" id="6.10.250.1910">
    <property type="match status" value="1"/>
</dbReference>
<dbReference type="Gene3D" id="1.10.287.950">
    <property type="entry name" value="Methyl-accepting chemotaxis protein"/>
    <property type="match status" value="1"/>
</dbReference>
<dbReference type="Gene3D" id="3.30.450.20">
    <property type="entry name" value="PAS domain"/>
    <property type="match status" value="2"/>
</dbReference>
<dbReference type="InterPro" id="IPR004090">
    <property type="entry name" value="Chemotax_Me-accpt_rcpt"/>
</dbReference>
<dbReference type="InterPro" id="IPR003660">
    <property type="entry name" value="HAMP_dom"/>
</dbReference>
<dbReference type="InterPro" id="IPR004089">
    <property type="entry name" value="MCPsignal_dom"/>
</dbReference>
<dbReference type="PANTHER" id="PTHR32089:SF112">
    <property type="entry name" value="LYSOZYME-LIKE PROTEIN-RELATED"/>
    <property type="match status" value="1"/>
</dbReference>
<dbReference type="PANTHER" id="PTHR32089">
    <property type="entry name" value="METHYL-ACCEPTING CHEMOTAXIS PROTEIN MCPB"/>
    <property type="match status" value="1"/>
</dbReference>
<dbReference type="Pfam" id="PF00672">
    <property type="entry name" value="HAMP"/>
    <property type="match status" value="1"/>
</dbReference>
<dbReference type="Pfam" id="PF00015">
    <property type="entry name" value="MCPsignal"/>
    <property type="match status" value="1"/>
</dbReference>
<dbReference type="PRINTS" id="PR00260">
    <property type="entry name" value="CHEMTRNSDUCR"/>
</dbReference>
<dbReference type="SMART" id="SM00304">
    <property type="entry name" value="HAMP"/>
    <property type="match status" value="2"/>
</dbReference>
<dbReference type="SMART" id="SM00283">
    <property type="entry name" value="MA"/>
    <property type="match status" value="1"/>
</dbReference>
<dbReference type="SUPFAM" id="SSF58104">
    <property type="entry name" value="Methyl-accepting chemotaxis protein (MCP) signaling domain"/>
    <property type="match status" value="1"/>
</dbReference>
<dbReference type="PROSITE" id="PS50111">
    <property type="entry name" value="CHEMOTAXIS_TRANSDUC_2"/>
    <property type="match status" value="1"/>
</dbReference>
<dbReference type="PROSITE" id="PS50885">
    <property type="entry name" value="HAMP"/>
    <property type="match status" value="2"/>
</dbReference>
<comment type="function">
    <text evidence="6">Potentially involved in chemo- or phototactic signal transduction.</text>
</comment>
<comment type="subcellular location">
    <subcellularLocation>
        <location evidence="7">Cell membrane</location>
        <topology evidence="7">Multi-pass membrane protein</topology>
    </subcellularLocation>
</comment>
<comment type="PTM">
    <text evidence="5">Methylated by CheR.</text>
</comment>
<comment type="similarity">
    <text evidence="7">Belongs to the methyl-accepting chemotaxis (MCP) protein family.</text>
</comment>
<proteinExistence type="evidence at protein level"/>
<sequence>MSIRSFAHRILRRALPGFVRRSYLAKFGVALLAVVVCISAAGGVMYLNTSEHLQQSSRTELKKAAELSSSAVDNWHDERTNNARMLAQYGVFDNDNATEVQQFFTDEQHHLPSDVRDIHYVSLTDARVITSTDAGLRNASFGSEAAPWSRQQLTPGDDGVFVSQPYVNDGITEVAYVARVSSTPGRRTAVVMTASLAAISSSFWDPTPHSFTQLVDGTGSVIADDSKRATRQPYVENATSPIVGARAVGFQPAAQAAKEMDQAHETAYAPVDGTPWVVTLHVPTSEAYGLASNMAENVLLILGIALAGLVFIALTLGRGTVRALNDLEAKAAALERGEYDTDLDVARVDELGRLFEAFASLRDTVQARIRDANEQQVDAEAARSEAEAAQADAEAAQAEAEAAREESEAQARRLETTAEAFSETMRAYAAGDLTVRLDADVEQAAMADIAAAFNEMAADMEATIADVVAFADEVATASTDASDSAAAVEQTGRDVSDAVGRIRDRAADQRDQLEAVASETDEMSATIEEVAASADQVAETSQRAAALGDDGQAAAQDAVAQLEEIEDETQAAATAVDDLEAKMSEIETIVAAITDIAEQTNMLALNANIEAARADQDGDGFAVVADEVKDLADESKASAAEIEALVAEVRAQTETSVAAMDRIQERVSDGVETVSETERSLSEIAGRIAEADTGVQEISNAMDDQAASVSDVTTAVGDVAALGEETATEAESTADAAAEQATTLSDVAAQTETLAEHAVALREHAAQFEVAADNEPGA</sequence>
<reference key="1">
    <citation type="journal article" date="1996" name="FEMS Microbiol. Lett.">
        <title>A family of halobacterial transducer proteins.</title>
        <authorList>
            <person name="Rudolph J."/>
            <person name="Nordmann B."/>
            <person name="Storch K.F."/>
            <person name="Gruenberg H."/>
            <person name="Rodewald K."/>
            <person name="Oesterhelt D."/>
        </authorList>
    </citation>
    <scope>NUCLEOTIDE SEQUENCE [GENOMIC DNA]</scope>
    <scope>FUNCTION</scope>
    <source>
        <strain>R1 / S9</strain>
    </source>
</reference>
<reference key="2">
    <citation type="journal article" date="2008" name="Genomics">
        <title>Evolution in the laboratory: the genome of Halobacterium salinarum strain R1 compared to that of strain NRC-1.</title>
        <authorList>
            <person name="Pfeiffer F."/>
            <person name="Schuster S.C."/>
            <person name="Broicher A."/>
            <person name="Falb M."/>
            <person name="Palm P."/>
            <person name="Rodewald K."/>
            <person name="Ruepp A."/>
            <person name="Soppa J."/>
            <person name="Tittor J."/>
            <person name="Oesterhelt D."/>
        </authorList>
    </citation>
    <scope>NUCLEOTIDE SEQUENCE [LARGE SCALE GENOMIC DNA]</scope>
    <source>
        <strain>ATCC 29341 / DSM 671 / R1</strain>
    </source>
</reference>
<reference key="3">
    <citation type="journal article" date="2008" name="J. Mol. Biol.">
        <title>Physiological sites of deamidation and methyl esterification in sensory transducers of Halobacterium salinarum.</title>
        <authorList>
            <person name="Koch M.K."/>
            <person name="Staudinger W.F."/>
            <person name="Siedler F."/>
            <person name="Oesterhelt D."/>
        </authorList>
    </citation>
    <scope>METHYLATION AT GLU-522 AND GLU-739</scope>
    <source>
        <strain>R1 / S9</strain>
    </source>
</reference>
<feature type="chain" id="PRO_0000429076" description="Transducer protein Htr4">
    <location>
        <begin position="1"/>
        <end position="778"/>
    </location>
</feature>
<feature type="topological domain" description="Cytoplasmic" evidence="1">
    <location>
        <begin position="1"/>
        <end position="26"/>
    </location>
</feature>
<feature type="transmembrane region" description="Helical" evidence="1">
    <location>
        <begin position="27"/>
        <end position="47"/>
    </location>
</feature>
<feature type="topological domain" description="Extracellular" evidence="1">
    <location>
        <begin position="48"/>
        <end position="296"/>
    </location>
</feature>
<feature type="transmembrane region" description="Helical" evidence="1">
    <location>
        <begin position="297"/>
        <end position="317"/>
    </location>
</feature>
<feature type="topological domain" description="Cytoplasmic" evidence="1">
    <location>
        <begin position="318"/>
        <end position="778"/>
    </location>
</feature>
<feature type="domain" description="HAMP 1" evidence="2">
    <location>
        <begin position="318"/>
        <end position="370"/>
    </location>
</feature>
<feature type="domain" description="HAMP 2" evidence="2">
    <location>
        <begin position="412"/>
        <end position="465"/>
    </location>
</feature>
<feature type="domain" description="Methyl-accepting transducer" evidence="3">
    <location>
        <begin position="484"/>
        <end position="720"/>
    </location>
</feature>
<feature type="region of interest" description="Disordered" evidence="4">
    <location>
        <begin position="376"/>
        <end position="411"/>
    </location>
</feature>
<feature type="compositionally biased region" description="Low complexity" evidence="4">
    <location>
        <begin position="387"/>
        <end position="400"/>
    </location>
</feature>
<feature type="compositionally biased region" description="Basic and acidic residues" evidence="4">
    <location>
        <begin position="401"/>
        <end position="411"/>
    </location>
</feature>
<feature type="modified residue" description="Glutamate methyl ester (Glu)" evidence="5">
    <location>
        <position position="522"/>
    </location>
</feature>
<feature type="modified residue" description="Glutamate methyl ester (Glu)" evidence="5">
    <location>
        <position position="739"/>
    </location>
</feature>
<feature type="sequence conflict" description="In Ref. 1; CAA64843." evidence="7" ref="1">
    <original>VVA</original>
    <variation>AGR</variation>
    <location>
        <begin position="467"/>
        <end position="469"/>
    </location>
</feature>
<feature type="sequence conflict" description="In Ref. 1; CAA64843." evidence="7" ref="1">
    <original>T</original>
    <variation>S</variation>
    <location>
        <position position="742"/>
    </location>
</feature>
<keyword id="KW-1003">Cell membrane</keyword>
<keyword id="KW-0145">Chemotaxis</keyword>
<keyword id="KW-0472">Membrane</keyword>
<keyword id="KW-0488">Methylation</keyword>
<keyword id="KW-0677">Repeat</keyword>
<keyword id="KW-0807">Transducer</keyword>
<keyword id="KW-0812">Transmembrane</keyword>
<keyword id="KW-1133">Transmembrane helix</keyword>
<gene>
    <name type="primary">htr4</name>
    <name type="ordered locus">OE_2189R</name>
</gene>
<organism>
    <name type="scientific">Halobacterium salinarum (strain ATCC 29341 / DSM 671 / R1)</name>
    <dbReference type="NCBI Taxonomy" id="478009"/>
    <lineage>
        <taxon>Archaea</taxon>
        <taxon>Methanobacteriati</taxon>
        <taxon>Methanobacteriota</taxon>
        <taxon>Stenosarchaea group</taxon>
        <taxon>Halobacteria</taxon>
        <taxon>Halobacteriales</taxon>
        <taxon>Halobacteriaceae</taxon>
        <taxon>Halobacterium</taxon>
        <taxon>Halobacterium salinarum NRC-34001</taxon>
    </lineage>
</organism>
<name>HTR4_HALS3</name>
<evidence type="ECO:0000255" key="1"/>
<evidence type="ECO:0000255" key="2">
    <source>
        <dbReference type="PROSITE-ProRule" id="PRU00102"/>
    </source>
</evidence>
<evidence type="ECO:0000255" key="3">
    <source>
        <dbReference type="PROSITE-ProRule" id="PRU00284"/>
    </source>
</evidence>
<evidence type="ECO:0000256" key="4">
    <source>
        <dbReference type="SAM" id="MobiDB-lite"/>
    </source>
</evidence>
<evidence type="ECO:0000269" key="5">
    <source>
    </source>
</evidence>
<evidence type="ECO:0000269" key="6">
    <source>
    </source>
</evidence>
<evidence type="ECO:0000305" key="7"/>